<evidence type="ECO:0000255" key="1">
    <source>
        <dbReference type="HAMAP-Rule" id="MF_00382"/>
    </source>
</evidence>
<evidence type="ECO:0000305" key="2"/>
<gene>
    <name evidence="1" type="primary">rplT</name>
    <name type="ordered locus">SP70585_1001</name>
</gene>
<proteinExistence type="inferred from homology"/>
<dbReference type="EMBL" id="CP000918">
    <property type="protein sequence ID" value="ACO16156.1"/>
    <property type="molecule type" value="Genomic_DNA"/>
</dbReference>
<dbReference type="RefSeq" id="WP_000124836.1">
    <property type="nucleotide sequence ID" value="NC_012468.1"/>
</dbReference>
<dbReference type="SMR" id="C1C6T8"/>
<dbReference type="GeneID" id="45653697"/>
<dbReference type="KEGG" id="snm:SP70585_1001"/>
<dbReference type="HOGENOM" id="CLU_123265_0_1_9"/>
<dbReference type="Proteomes" id="UP000002211">
    <property type="component" value="Chromosome"/>
</dbReference>
<dbReference type="GO" id="GO:1990904">
    <property type="term" value="C:ribonucleoprotein complex"/>
    <property type="evidence" value="ECO:0007669"/>
    <property type="project" value="UniProtKB-KW"/>
</dbReference>
<dbReference type="GO" id="GO:0005840">
    <property type="term" value="C:ribosome"/>
    <property type="evidence" value="ECO:0007669"/>
    <property type="project" value="UniProtKB-KW"/>
</dbReference>
<dbReference type="GO" id="GO:0019843">
    <property type="term" value="F:rRNA binding"/>
    <property type="evidence" value="ECO:0007669"/>
    <property type="project" value="UniProtKB-UniRule"/>
</dbReference>
<dbReference type="GO" id="GO:0003735">
    <property type="term" value="F:structural constituent of ribosome"/>
    <property type="evidence" value="ECO:0007669"/>
    <property type="project" value="InterPro"/>
</dbReference>
<dbReference type="GO" id="GO:0000027">
    <property type="term" value="P:ribosomal large subunit assembly"/>
    <property type="evidence" value="ECO:0007669"/>
    <property type="project" value="UniProtKB-UniRule"/>
</dbReference>
<dbReference type="GO" id="GO:0006412">
    <property type="term" value="P:translation"/>
    <property type="evidence" value="ECO:0007669"/>
    <property type="project" value="InterPro"/>
</dbReference>
<dbReference type="CDD" id="cd07026">
    <property type="entry name" value="Ribosomal_L20"/>
    <property type="match status" value="1"/>
</dbReference>
<dbReference type="FunFam" id="1.10.1900.20:FF:000001">
    <property type="entry name" value="50S ribosomal protein L20"/>
    <property type="match status" value="1"/>
</dbReference>
<dbReference type="Gene3D" id="6.10.160.10">
    <property type="match status" value="1"/>
</dbReference>
<dbReference type="Gene3D" id="1.10.1900.20">
    <property type="entry name" value="Ribosomal protein L20"/>
    <property type="match status" value="1"/>
</dbReference>
<dbReference type="HAMAP" id="MF_00382">
    <property type="entry name" value="Ribosomal_bL20"/>
    <property type="match status" value="1"/>
</dbReference>
<dbReference type="InterPro" id="IPR005813">
    <property type="entry name" value="Ribosomal_bL20"/>
</dbReference>
<dbReference type="InterPro" id="IPR049946">
    <property type="entry name" value="RIBOSOMAL_L20_CS"/>
</dbReference>
<dbReference type="InterPro" id="IPR035566">
    <property type="entry name" value="Ribosomal_protein_bL20_C"/>
</dbReference>
<dbReference type="NCBIfam" id="TIGR01032">
    <property type="entry name" value="rplT_bact"/>
    <property type="match status" value="1"/>
</dbReference>
<dbReference type="PANTHER" id="PTHR10986">
    <property type="entry name" value="39S RIBOSOMAL PROTEIN L20"/>
    <property type="match status" value="1"/>
</dbReference>
<dbReference type="Pfam" id="PF00453">
    <property type="entry name" value="Ribosomal_L20"/>
    <property type="match status" value="1"/>
</dbReference>
<dbReference type="PRINTS" id="PR00062">
    <property type="entry name" value="RIBOSOMALL20"/>
</dbReference>
<dbReference type="SUPFAM" id="SSF74731">
    <property type="entry name" value="Ribosomal protein L20"/>
    <property type="match status" value="1"/>
</dbReference>
<dbReference type="PROSITE" id="PS00937">
    <property type="entry name" value="RIBOSOMAL_L20"/>
    <property type="match status" value="1"/>
</dbReference>
<reference key="1">
    <citation type="journal article" date="2010" name="Genome Biol.">
        <title>Structure and dynamics of the pan-genome of Streptococcus pneumoniae and closely related species.</title>
        <authorList>
            <person name="Donati C."/>
            <person name="Hiller N.L."/>
            <person name="Tettelin H."/>
            <person name="Muzzi A."/>
            <person name="Croucher N.J."/>
            <person name="Angiuoli S.V."/>
            <person name="Oggioni M."/>
            <person name="Dunning Hotopp J.C."/>
            <person name="Hu F.Z."/>
            <person name="Riley D.R."/>
            <person name="Covacci A."/>
            <person name="Mitchell T.J."/>
            <person name="Bentley S.D."/>
            <person name="Kilian M."/>
            <person name="Ehrlich G.D."/>
            <person name="Rappuoli R."/>
            <person name="Moxon E.R."/>
            <person name="Masignani V."/>
        </authorList>
    </citation>
    <scope>NUCLEOTIDE SEQUENCE [LARGE SCALE GENOMIC DNA]</scope>
    <source>
        <strain>70585</strain>
    </source>
</reference>
<accession>C1C6T8</accession>
<sequence>MARVKGGVVSRKRRKRILKLAKGYYGAKHILFRTAKEQVMNSYYYAYRDRRQKKRDFRKLWITRINAAARMNGLSYSQLMHGLKLAEIEVNRKMLADLAVNDAVAFTALADAAKAKLGK</sequence>
<organism>
    <name type="scientific">Streptococcus pneumoniae (strain 70585)</name>
    <dbReference type="NCBI Taxonomy" id="488221"/>
    <lineage>
        <taxon>Bacteria</taxon>
        <taxon>Bacillati</taxon>
        <taxon>Bacillota</taxon>
        <taxon>Bacilli</taxon>
        <taxon>Lactobacillales</taxon>
        <taxon>Streptococcaceae</taxon>
        <taxon>Streptococcus</taxon>
    </lineage>
</organism>
<comment type="function">
    <text evidence="1">Binds directly to 23S ribosomal RNA and is necessary for the in vitro assembly process of the 50S ribosomal subunit. It is not involved in the protein synthesizing functions of that subunit.</text>
</comment>
<comment type="similarity">
    <text evidence="1">Belongs to the bacterial ribosomal protein bL20 family.</text>
</comment>
<name>RL20_STRP7</name>
<feature type="chain" id="PRO_1000193979" description="Large ribosomal subunit protein bL20">
    <location>
        <begin position="1"/>
        <end position="119"/>
    </location>
</feature>
<keyword id="KW-0687">Ribonucleoprotein</keyword>
<keyword id="KW-0689">Ribosomal protein</keyword>
<keyword id="KW-0694">RNA-binding</keyword>
<keyword id="KW-0699">rRNA-binding</keyword>
<protein>
    <recommendedName>
        <fullName evidence="1">Large ribosomal subunit protein bL20</fullName>
    </recommendedName>
    <alternativeName>
        <fullName evidence="2">50S ribosomal protein L20</fullName>
    </alternativeName>
</protein>